<evidence type="ECO:0000250" key="1">
    <source>
        <dbReference type="UniProtKB" id="D6WI29"/>
    </source>
</evidence>
<evidence type="ECO:0000250" key="2">
    <source>
        <dbReference type="UniProtKB" id="Q8N884"/>
    </source>
</evidence>
<evidence type="ECO:0000269" key="3">
    <source>
    </source>
</evidence>
<evidence type="ECO:0000303" key="4">
    <source>
    </source>
</evidence>
<evidence type="ECO:0000305" key="5"/>
<feature type="chain" id="PRO_0000460017" description="Cyclic GMP-AMP synthase-like receptor">
    <location>
        <begin position="1"/>
        <end position="435"/>
    </location>
</feature>
<feature type="binding site" evidence="2">
    <location>
        <position position="70"/>
    </location>
    <ligand>
        <name>ATP</name>
        <dbReference type="ChEBI" id="CHEBI:30616"/>
    </ligand>
</feature>
<feature type="binding site" evidence="2">
    <location>
        <begin position="82"/>
        <end position="84"/>
    </location>
    <ligand>
        <name>ATP</name>
        <dbReference type="ChEBI" id="CHEBI:30616"/>
    </ligand>
</feature>
<feature type="binding site" evidence="2">
    <location>
        <position position="82"/>
    </location>
    <ligand>
        <name>Mg(2+)</name>
        <dbReference type="ChEBI" id="CHEBI:18420"/>
        <note>catalytic</note>
    </ligand>
</feature>
<feature type="binding site" evidence="2">
    <location>
        <position position="84"/>
    </location>
    <ligand>
        <name>Mg(2+)</name>
        <dbReference type="ChEBI" id="CHEBI:18420"/>
        <note>catalytic</note>
    </ligand>
</feature>
<feature type="binding site" evidence="2">
    <location>
        <position position="209"/>
    </location>
    <ligand>
        <name>GTP</name>
        <dbReference type="ChEBI" id="CHEBI:37565"/>
    </ligand>
</feature>
<feature type="binding site" evidence="2">
    <location>
        <position position="209"/>
    </location>
    <ligand>
        <name>Mg(2+)</name>
        <dbReference type="ChEBI" id="CHEBI:18420"/>
        <note>catalytic</note>
    </ligand>
</feature>
<feature type="binding site" evidence="2">
    <location>
        <position position="286"/>
    </location>
    <ligand>
        <name>ATP</name>
        <dbReference type="ChEBI" id="CHEBI:30616"/>
    </ligand>
</feature>
<feature type="binding site" evidence="2">
    <location>
        <begin position="300"/>
        <end position="304"/>
    </location>
    <ligand>
        <name>ATP</name>
        <dbReference type="ChEBI" id="CHEBI:30616"/>
    </ligand>
</feature>
<feature type="binding site" evidence="1">
    <location>
        <position position="311"/>
    </location>
    <ligand>
        <name>Mn(2+)</name>
        <dbReference type="ChEBI" id="CHEBI:29035"/>
    </ligand>
</feature>
<feature type="binding site" evidence="1">
    <location>
        <position position="312"/>
    </location>
    <ligand>
        <name>Mn(2+)</name>
        <dbReference type="ChEBI" id="CHEBI:29035"/>
    </ligand>
</feature>
<feature type="binding site" evidence="1">
    <location>
        <position position="317"/>
    </location>
    <ligand>
        <name>Mn(2+)</name>
        <dbReference type="ChEBI" id="CHEBI:29035"/>
    </ligand>
</feature>
<sequence>MNFRDNSNIEYRKLDAPLKFINKNYITIGDKDREKYSKILADILEAFRRKMAESDEVYKTFEGAVHYTGSAYDKVKVGKPDEFDLNIVMKLPAAWDYHNDIEVKNSSPSYVTINVKSGCERSYRDPSFLNKYQKGIRIWTDNEGYFIQEQFHAWMEGVVKKALNKFPSHGLEYIIQTNGHAIYVKTKKSGPAVTLQCESQDRKIKIDVDLVPVIQFNNNSSTLWLSPPVRQRPLLCCKKTWCAVPKPKKNNGFTNKNREWRVSFTDQERDLLYNKGRIKNLIRQIKKLKSVHEETKSLPSYYVKTIFLWALDDKSLDQNMWTQWSDGALFMFMLKRLHSHLDENKIPYYWDSRCNLLDALGYAVNNMKYKIQRIIKEIDNSLDNPEVLAKYLLTADEFADFRRRYGSIEEGFESLSIDSAPPVSDLRGDSRCCIL</sequence>
<protein>
    <recommendedName>
        <fullName evidence="5">Cyclic GMP-AMP synthase-like receptor</fullName>
        <shortName evidence="4">Cf-cGLR</shortName>
        <ecNumber evidence="3">2.7.7.86</ecNumber>
    </recommendedName>
</protein>
<reference key="1">
    <citation type="submission" date="2018-08" db="EMBL/GenBank/DDBJ databases">
        <title>One of the last remaining medically-relevant arthropod vectors gets a genome sequence: draft genome assembly and annotation for the cat flea, Ctenocephalides felis.</title>
        <authorList>
            <person name="Driscoll T.P."/>
            <person name="Verhoeve V.I."/>
            <person name="Gillespie J."/>
            <person name="Guillotte M.L."/>
            <person name="Rennoll-Bankert K.E."/>
            <person name="Rahman M.S."/>
            <person name="Hagen D."/>
            <person name="Elsik C.G."/>
            <person name="Macaluso K.R."/>
            <person name="Azad A.F."/>
        </authorList>
    </citation>
    <scope>NUCLEOTIDE SEQUENCE [LARGE SCALE GENOMIC DNA]</scope>
</reference>
<reference key="2">
    <citation type="journal article" date="2023" name="Cell">
        <title>cGLRs are a diverse family of pattern recognition receptors in innate immunity.</title>
        <authorList>
            <person name="Li Y."/>
            <person name="Slavik K.M."/>
            <person name="Toyoda H.C."/>
            <person name="Morehouse B.R."/>
            <person name="de Oliveira Mann C.C."/>
            <person name="Elek A."/>
            <person name="Levy S."/>
            <person name="Wang Z."/>
            <person name="Mears K.S."/>
            <person name="Liu J."/>
            <person name="Kashin D."/>
            <person name="Guo X."/>
            <person name="Mass T."/>
            <person name="Sebe-Pedros A."/>
            <person name="Schwede F."/>
            <person name="Kranzusch P.J."/>
        </authorList>
    </citation>
    <scope>FUNCTION</scope>
    <scope>CATALYTIC ACTIVITY</scope>
</reference>
<gene>
    <name evidence="4" type="primary">cGLR</name>
</gene>
<accession>P0DXB5</accession>
<organism>
    <name type="scientific">Ctenocephalides felis</name>
    <name type="common">Cat flea</name>
    <dbReference type="NCBI Taxonomy" id="7515"/>
    <lineage>
        <taxon>Eukaryota</taxon>
        <taxon>Metazoa</taxon>
        <taxon>Ecdysozoa</taxon>
        <taxon>Arthropoda</taxon>
        <taxon>Hexapoda</taxon>
        <taxon>Insecta</taxon>
        <taxon>Pterygota</taxon>
        <taxon>Neoptera</taxon>
        <taxon>Endopterygota</taxon>
        <taxon>Siphonaptera</taxon>
        <taxon>Pulicidae</taxon>
        <taxon>Archaeopsyllinae</taxon>
        <taxon>Ctenocephalides</taxon>
    </lineage>
</organism>
<dbReference type="EC" id="2.7.7.86" evidence="3"/>
<dbReference type="EMBL" id="QVAO01003571">
    <property type="status" value="NOT_ANNOTATED_CDS"/>
    <property type="molecule type" value="Genomic_DNA"/>
</dbReference>
<dbReference type="SMR" id="P0DXB5"/>
<dbReference type="GO" id="GO:0061501">
    <property type="term" value="F:2',3'-cyclic GMP-AMP synthase activity"/>
    <property type="evidence" value="ECO:0000314"/>
    <property type="project" value="UniProtKB"/>
</dbReference>
<dbReference type="GO" id="GO:0005524">
    <property type="term" value="F:ATP binding"/>
    <property type="evidence" value="ECO:0007669"/>
    <property type="project" value="UniProtKB-KW"/>
</dbReference>
<dbReference type="GO" id="GO:0005525">
    <property type="term" value="F:GTP binding"/>
    <property type="evidence" value="ECO:0007669"/>
    <property type="project" value="UniProtKB-KW"/>
</dbReference>
<dbReference type="GO" id="GO:0046872">
    <property type="term" value="F:metal ion binding"/>
    <property type="evidence" value="ECO:0007669"/>
    <property type="project" value="UniProtKB-KW"/>
</dbReference>
<dbReference type="GO" id="GO:0045087">
    <property type="term" value="P:innate immune response"/>
    <property type="evidence" value="ECO:0007669"/>
    <property type="project" value="UniProtKB-KW"/>
</dbReference>
<dbReference type="Gene3D" id="1.10.1410.40">
    <property type="match status" value="1"/>
</dbReference>
<dbReference type="Gene3D" id="3.30.460.90">
    <property type="match status" value="1"/>
</dbReference>
<dbReference type="InterPro" id="IPR046903">
    <property type="entry name" value="Mab-21-like_nuc_Trfase"/>
</dbReference>
<dbReference type="InterPro" id="IPR046906">
    <property type="entry name" value="Mab-21_HhH/H2TH-like"/>
</dbReference>
<dbReference type="InterPro" id="IPR024810">
    <property type="entry name" value="MAB21L/cGLR"/>
</dbReference>
<dbReference type="PANTHER" id="PTHR10656">
    <property type="entry name" value="CELL FATE DETERMINING PROTEIN MAB21-RELATED"/>
    <property type="match status" value="1"/>
</dbReference>
<dbReference type="PANTHER" id="PTHR10656:SF42">
    <property type="entry name" value="CYCLIC GMP-AMP SYNTHASE-LIKE PROTEIN-RELATED"/>
    <property type="match status" value="1"/>
</dbReference>
<dbReference type="Pfam" id="PF03281">
    <property type="entry name" value="Mab-21"/>
    <property type="match status" value="1"/>
</dbReference>
<dbReference type="Pfam" id="PF20266">
    <property type="entry name" value="Mab-21_C"/>
    <property type="match status" value="1"/>
</dbReference>
<dbReference type="SMART" id="SM01265">
    <property type="entry name" value="Mab-21"/>
    <property type="match status" value="1"/>
</dbReference>
<name>CGLR_CTEFE</name>
<comment type="function">
    <text evidence="3">Nucleotidyltransferase that catalyzes the formation of cyclic GMP-AMP (2',3'-cGAMP) from ATP and GTP and plays a key role in innate immunity (PubMed:37379839). Directly binds some unknown ligand, activating the nucleotidyltransferase activity, leading to synthesis of 2',3'-cGAMP, a second messenger that binds to and activates Sting, thereby triggering the immune response via activation of the NF-kappa-B transcription factor (PubMed:37379839).</text>
</comment>
<comment type="catalytic activity">
    <reaction evidence="3">
        <text>GTP + ATP = 2',3'-cGAMP + 2 diphosphate</text>
        <dbReference type="Rhea" id="RHEA:42064"/>
        <dbReference type="ChEBI" id="CHEBI:30616"/>
        <dbReference type="ChEBI" id="CHEBI:33019"/>
        <dbReference type="ChEBI" id="CHEBI:37565"/>
        <dbReference type="ChEBI" id="CHEBI:143093"/>
        <dbReference type="EC" id="2.7.7.86"/>
    </reaction>
    <physiologicalReaction direction="left-to-right" evidence="3">
        <dbReference type="Rhea" id="RHEA:42065"/>
    </physiologicalReaction>
</comment>
<comment type="catalytic activity">
    <reaction evidence="3">
        <text>GTP + ATP = pppGp(2'-5')A + diphosphate</text>
        <dbReference type="Rhea" id="RHEA:23748"/>
        <dbReference type="ChEBI" id="CHEBI:30616"/>
        <dbReference type="ChEBI" id="CHEBI:33019"/>
        <dbReference type="ChEBI" id="CHEBI:37565"/>
        <dbReference type="ChEBI" id="CHEBI:78318"/>
    </reaction>
    <physiologicalReaction direction="left-to-right" evidence="3">
        <dbReference type="Rhea" id="RHEA:23749"/>
    </physiologicalReaction>
</comment>
<comment type="catalytic activity">
    <reaction evidence="3">
        <text>pppGp(2'-5')A = 2',3'-cGAMP + diphosphate</text>
        <dbReference type="Rhea" id="RHEA:23924"/>
        <dbReference type="ChEBI" id="CHEBI:33019"/>
        <dbReference type="ChEBI" id="CHEBI:78318"/>
        <dbReference type="ChEBI" id="CHEBI:143093"/>
    </reaction>
    <physiologicalReaction direction="left-to-right" evidence="3">
        <dbReference type="Rhea" id="RHEA:23925"/>
    </physiologicalReaction>
</comment>
<comment type="cofactor">
    <cofactor evidence="1">
        <name>Mg(2+)</name>
        <dbReference type="ChEBI" id="CHEBI:18420"/>
    </cofactor>
    <cofactor evidence="1">
        <name>Mn(2+)</name>
        <dbReference type="ChEBI" id="CHEBI:29035"/>
    </cofactor>
</comment>
<comment type="similarity">
    <text evidence="5">Belongs to the mab-21 family.</text>
</comment>
<proteinExistence type="evidence at protein level"/>
<keyword id="KW-0067">ATP-binding</keyword>
<keyword id="KW-0342">GTP-binding</keyword>
<keyword id="KW-0391">Immunity</keyword>
<keyword id="KW-0399">Innate immunity</keyword>
<keyword id="KW-0460">Magnesium</keyword>
<keyword id="KW-0464">Manganese</keyword>
<keyword id="KW-0479">Metal-binding</keyword>
<keyword id="KW-0547">Nucleotide-binding</keyword>
<keyword id="KW-0548">Nucleotidyltransferase</keyword>
<keyword id="KW-0808">Transferase</keyword>
<keyword id="KW-0862">Zinc</keyword>